<proteinExistence type="evidence at transcript level"/>
<gene>
    <name type="primary">erkA</name>
    <name type="synonym">erk1</name>
    <name type="ORF">DDB_G0286353</name>
</gene>
<evidence type="ECO:0000250" key="1"/>
<evidence type="ECO:0000255" key="2">
    <source>
        <dbReference type="PROSITE-ProRule" id="PRU00159"/>
    </source>
</evidence>
<evidence type="ECO:0000255" key="3">
    <source>
        <dbReference type="PROSITE-ProRule" id="PRU10027"/>
    </source>
</evidence>
<evidence type="ECO:0000256" key="4">
    <source>
        <dbReference type="SAM" id="MobiDB-lite"/>
    </source>
</evidence>
<evidence type="ECO:0000269" key="5">
    <source>
    </source>
</evidence>
<evidence type="ECO:0000305" key="6"/>
<organism>
    <name type="scientific">Dictyostelium discoideum</name>
    <name type="common">Social amoeba</name>
    <dbReference type="NCBI Taxonomy" id="44689"/>
    <lineage>
        <taxon>Eukaryota</taxon>
        <taxon>Amoebozoa</taxon>
        <taxon>Evosea</taxon>
        <taxon>Eumycetozoa</taxon>
        <taxon>Dictyostelia</taxon>
        <taxon>Dictyosteliales</taxon>
        <taxon>Dictyosteliaceae</taxon>
        <taxon>Dictyostelium</taxon>
    </lineage>
</organism>
<reference key="1">
    <citation type="journal article" date="2005" name="Nature">
        <title>The genome of the social amoeba Dictyostelium discoideum.</title>
        <authorList>
            <person name="Eichinger L."/>
            <person name="Pachebat J.A."/>
            <person name="Gloeckner G."/>
            <person name="Rajandream M.A."/>
            <person name="Sucgang R."/>
            <person name="Berriman M."/>
            <person name="Song J."/>
            <person name="Olsen R."/>
            <person name="Szafranski K."/>
            <person name="Xu Q."/>
            <person name="Tunggal B."/>
            <person name="Kummerfeld S."/>
            <person name="Madera M."/>
            <person name="Konfortov B.A."/>
            <person name="Rivero F."/>
            <person name="Bankier A.T."/>
            <person name="Lehmann R."/>
            <person name="Hamlin N."/>
            <person name="Davies R."/>
            <person name="Gaudet P."/>
            <person name="Fey P."/>
            <person name="Pilcher K."/>
            <person name="Chen G."/>
            <person name="Saunders D."/>
            <person name="Sodergren E.J."/>
            <person name="Davis P."/>
            <person name="Kerhornou A."/>
            <person name="Nie X."/>
            <person name="Hall N."/>
            <person name="Anjard C."/>
            <person name="Hemphill L."/>
            <person name="Bason N."/>
            <person name="Farbrother P."/>
            <person name="Desany B."/>
            <person name="Just E."/>
            <person name="Morio T."/>
            <person name="Rost R."/>
            <person name="Churcher C.M."/>
            <person name="Cooper J."/>
            <person name="Haydock S."/>
            <person name="van Driessche N."/>
            <person name="Cronin A."/>
            <person name="Goodhead I."/>
            <person name="Muzny D.M."/>
            <person name="Mourier T."/>
            <person name="Pain A."/>
            <person name="Lu M."/>
            <person name="Harper D."/>
            <person name="Lindsay R."/>
            <person name="Hauser H."/>
            <person name="James K.D."/>
            <person name="Quiles M."/>
            <person name="Madan Babu M."/>
            <person name="Saito T."/>
            <person name="Buchrieser C."/>
            <person name="Wardroper A."/>
            <person name="Felder M."/>
            <person name="Thangavelu M."/>
            <person name="Johnson D."/>
            <person name="Knights A."/>
            <person name="Loulseged H."/>
            <person name="Mungall K.L."/>
            <person name="Oliver K."/>
            <person name="Price C."/>
            <person name="Quail M.A."/>
            <person name="Urushihara H."/>
            <person name="Hernandez J."/>
            <person name="Rabbinowitsch E."/>
            <person name="Steffen D."/>
            <person name="Sanders M."/>
            <person name="Ma J."/>
            <person name="Kohara Y."/>
            <person name="Sharp S."/>
            <person name="Simmonds M.N."/>
            <person name="Spiegler S."/>
            <person name="Tivey A."/>
            <person name="Sugano S."/>
            <person name="White B."/>
            <person name="Walker D."/>
            <person name="Woodward J.R."/>
            <person name="Winckler T."/>
            <person name="Tanaka Y."/>
            <person name="Shaulsky G."/>
            <person name="Schleicher M."/>
            <person name="Weinstock G.M."/>
            <person name="Rosenthal A."/>
            <person name="Cox E.C."/>
            <person name="Chisholm R.L."/>
            <person name="Gibbs R.A."/>
            <person name="Loomis W.F."/>
            <person name="Platzer M."/>
            <person name="Kay R.R."/>
            <person name="Williams J.G."/>
            <person name="Dear P.H."/>
            <person name="Noegel A.A."/>
            <person name="Barrell B.G."/>
            <person name="Kuspa A."/>
        </authorList>
    </citation>
    <scope>NUCLEOTIDE SEQUENCE [LARGE SCALE GENOMIC DNA]</scope>
    <source>
        <strain>AX4</strain>
    </source>
</reference>
<reference key="2">
    <citation type="journal article" date="1994" name="Mol. Cell. Biol.">
        <title>Identification and functional analysis of a developmentally regulated extracellular signal-regulated kinase gene in Dictyostelium discoideum.</title>
        <authorList>
            <person name="Gaskins C.J."/>
            <person name="Maeda M."/>
            <person name="Firtel R.A."/>
        </authorList>
    </citation>
    <scope>NUCLEOTIDE SEQUENCE [MRNA] OF 96-529</scope>
    <scope>FUNCTION</scope>
    <source>
        <strain>AX3</strain>
    </source>
</reference>
<sequence>MEPEFDHFQSQMDSDNTHQSTMFNVQDNNAILMSGMENVLQSPRQLQAAAQAQQQAAAQAQQQQVQAQQVQAQQAQQQQQQQQNQQQQQQQQNQQNQQQQQNQQQQSQQMTQQQLQQLMPPPPTSDTSNFNDNISYFVYGSQFTVPRRYSIVKCIGHGAYGVVCSAKDNLTGEKVAIKKISKAFDNLKDTKRTLREIHLLRHFKHENLISIKDILKPNSKEQFEDVYIVSELMDTDLHQIITSPQPLSDDHCQYFVYQMLRGLKHIHSANVLHRDLKPSNLLINEDCLLKICDLGLARVEDATHQGFMTEYVATRWYRAPEVILSWNKYTKAIDIWSVGCIFAELLGRKPLFQGKDYIHQITLIIETIGSPSEEDICNIANEQARQFIRNMGNQPKVNFANMFPKANPDAIDLLERMLYFDPSKRLTVEEALAHPYFQSLHDPSDEPICLHKFSLNFEAWDLNRDLLKELIYNEMLAYHPEDPQAPYYTDLNNPNFNLSRIQSSSELFNLLQQQKQQIHQQVNQQSIKN</sequence>
<dbReference type="EC" id="2.7.11.24"/>
<dbReference type="EMBL" id="AAFI02000085">
    <property type="protein sequence ID" value="EAL64201.1"/>
    <property type="molecule type" value="Genomic_DNA"/>
</dbReference>
<dbReference type="EMBL" id="U11077">
    <property type="protein sequence ID" value="AAA59387.1"/>
    <property type="status" value="ALT_INIT"/>
    <property type="molecule type" value="mRNA"/>
</dbReference>
<dbReference type="PIR" id="A56042">
    <property type="entry name" value="A56042"/>
</dbReference>
<dbReference type="RefSeq" id="XP_637704.1">
    <property type="nucleotide sequence ID" value="XM_632612.1"/>
</dbReference>
<dbReference type="SMR" id="P42525"/>
<dbReference type="BioGRID" id="1250572">
    <property type="interactions" value="1"/>
</dbReference>
<dbReference type="FunCoup" id="P42525">
    <property type="interactions" value="513"/>
</dbReference>
<dbReference type="STRING" id="44689.P42525"/>
<dbReference type="PaxDb" id="44689-DDB0201635"/>
<dbReference type="EnsemblProtists" id="EAL64201">
    <property type="protein sequence ID" value="EAL64201"/>
    <property type="gene ID" value="DDB_G0286353"/>
</dbReference>
<dbReference type="GeneID" id="8625569"/>
<dbReference type="KEGG" id="ddi:DDB_G0286353"/>
<dbReference type="dictyBase" id="DDB_G0286353">
    <property type="gene designation" value="erkA"/>
</dbReference>
<dbReference type="VEuPathDB" id="AmoebaDB:DDB_G0286353"/>
<dbReference type="eggNOG" id="KOG0660">
    <property type="taxonomic scope" value="Eukaryota"/>
</dbReference>
<dbReference type="HOGENOM" id="CLU_000288_181_1_1"/>
<dbReference type="InParanoid" id="P42525"/>
<dbReference type="OMA" id="CYFLYQM"/>
<dbReference type="PhylomeDB" id="P42525"/>
<dbReference type="BRENDA" id="2.7.11.24">
    <property type="organism ID" value="1939"/>
</dbReference>
<dbReference type="Reactome" id="R-DDI-110056">
    <property type="pathway name" value="MAPK3 (ERK1) activation"/>
</dbReference>
<dbReference type="Reactome" id="R-DDI-112409">
    <property type="pathway name" value="RAF-independent MAPK1/3 activation"/>
</dbReference>
<dbReference type="Reactome" id="R-DDI-112411">
    <property type="pathway name" value="MAPK1 (ERK2) activation"/>
</dbReference>
<dbReference type="Reactome" id="R-DDI-1169408">
    <property type="pathway name" value="ISG15 antiviral mechanism"/>
</dbReference>
<dbReference type="Reactome" id="R-DDI-170968">
    <property type="pathway name" value="Frs2-mediated activation"/>
</dbReference>
<dbReference type="Reactome" id="R-DDI-198753">
    <property type="pathway name" value="ERK/MAPK targets"/>
</dbReference>
<dbReference type="Reactome" id="R-DDI-198765">
    <property type="pathway name" value="Signalling to ERK5"/>
</dbReference>
<dbReference type="Reactome" id="R-DDI-202670">
    <property type="pathway name" value="ERKs are inactivated"/>
</dbReference>
<dbReference type="Reactome" id="R-DDI-2029482">
    <property type="pathway name" value="Regulation of actin dynamics for phagocytic cup formation"/>
</dbReference>
<dbReference type="Reactome" id="R-DDI-2559582">
    <property type="pathway name" value="Senescence-Associated Secretory Phenotype (SASP)"/>
</dbReference>
<dbReference type="Reactome" id="R-DDI-3371453">
    <property type="pathway name" value="Regulation of HSF1-mediated heat shock response"/>
</dbReference>
<dbReference type="Reactome" id="R-DDI-375165">
    <property type="pathway name" value="NCAM signaling for neurite out-growth"/>
</dbReference>
<dbReference type="Reactome" id="R-DDI-4086398">
    <property type="pathway name" value="Ca2+ pathway"/>
</dbReference>
<dbReference type="Reactome" id="R-DDI-437239">
    <property type="pathway name" value="Recycling pathway of L1"/>
</dbReference>
<dbReference type="Reactome" id="R-DDI-445144">
    <property type="pathway name" value="Signal transduction by L1"/>
</dbReference>
<dbReference type="Reactome" id="R-DDI-5663213">
    <property type="pathway name" value="RHO GTPases Activate WASPs and WAVEs"/>
</dbReference>
<dbReference type="Reactome" id="R-DDI-5673001">
    <property type="pathway name" value="RAF/MAP kinase cascade"/>
</dbReference>
<dbReference type="Reactome" id="R-DDI-5674135">
    <property type="pathway name" value="MAP2K and MAPK activation"/>
</dbReference>
<dbReference type="Reactome" id="R-DDI-5674499">
    <property type="pathway name" value="Negative feedback regulation of MAPK pathway"/>
</dbReference>
<dbReference type="Reactome" id="R-DDI-5675221">
    <property type="pathway name" value="Negative regulation of MAPK pathway"/>
</dbReference>
<dbReference type="Reactome" id="R-DDI-5687128">
    <property type="pathway name" value="MAPK6/MAPK4 signaling"/>
</dbReference>
<dbReference type="Reactome" id="R-DDI-6798695">
    <property type="pathway name" value="Neutrophil degranulation"/>
</dbReference>
<dbReference type="Reactome" id="R-DDI-881907">
    <property type="pathway name" value="Gastrin-CREB signalling pathway via PKC and MAPK"/>
</dbReference>
<dbReference type="Reactome" id="R-DDI-9634635">
    <property type="pathway name" value="Estrogen-stimulated signaling through PRKCZ"/>
</dbReference>
<dbReference type="Reactome" id="R-DDI-9856649">
    <property type="pathway name" value="Transcriptional and post-translational regulation of MITF-M expression and activity"/>
</dbReference>
<dbReference type="PRO" id="PR:P42525"/>
<dbReference type="Proteomes" id="UP000002195">
    <property type="component" value="Chromosome 4"/>
</dbReference>
<dbReference type="GO" id="GO:0005938">
    <property type="term" value="C:cell cortex"/>
    <property type="evidence" value="ECO:0000314"/>
    <property type="project" value="dictyBase"/>
</dbReference>
<dbReference type="GO" id="GO:0031252">
    <property type="term" value="C:cell leading edge"/>
    <property type="evidence" value="ECO:0000314"/>
    <property type="project" value="dictyBase"/>
</dbReference>
<dbReference type="GO" id="GO:0005737">
    <property type="term" value="C:cytoplasm"/>
    <property type="evidence" value="ECO:0000318"/>
    <property type="project" value="GO_Central"/>
</dbReference>
<dbReference type="GO" id="GO:0005829">
    <property type="term" value="C:cytosol"/>
    <property type="evidence" value="ECO:0000314"/>
    <property type="project" value="dictyBase"/>
</dbReference>
<dbReference type="GO" id="GO:0005634">
    <property type="term" value="C:nucleus"/>
    <property type="evidence" value="ECO:0000314"/>
    <property type="project" value="dictyBase"/>
</dbReference>
<dbReference type="GO" id="GO:0005524">
    <property type="term" value="F:ATP binding"/>
    <property type="evidence" value="ECO:0007669"/>
    <property type="project" value="UniProtKB-KW"/>
</dbReference>
<dbReference type="GO" id="GO:0004707">
    <property type="term" value="F:MAP kinase activity"/>
    <property type="evidence" value="ECO:0000314"/>
    <property type="project" value="dictyBase"/>
</dbReference>
<dbReference type="GO" id="GO:0106310">
    <property type="term" value="F:protein serine kinase activity"/>
    <property type="evidence" value="ECO:0007669"/>
    <property type="project" value="RHEA"/>
</dbReference>
<dbReference type="GO" id="GO:0004674">
    <property type="term" value="F:protein serine/threonine kinase activity"/>
    <property type="evidence" value="ECO:0000318"/>
    <property type="project" value="GO_Central"/>
</dbReference>
<dbReference type="GO" id="GO:0031152">
    <property type="term" value="P:aggregation involved in sorocarp development"/>
    <property type="evidence" value="ECO:0000315"/>
    <property type="project" value="dictyBase"/>
</dbReference>
<dbReference type="GO" id="GO:0019954">
    <property type="term" value="P:asexual reproduction"/>
    <property type="evidence" value="ECO:0000315"/>
    <property type="project" value="dictyBase"/>
</dbReference>
<dbReference type="GO" id="GO:0051301">
    <property type="term" value="P:cell division"/>
    <property type="evidence" value="ECO:0007669"/>
    <property type="project" value="UniProtKB-KW"/>
</dbReference>
<dbReference type="GO" id="GO:0043327">
    <property type="term" value="P:chemotaxis to cAMP"/>
    <property type="evidence" value="ECO:0000315"/>
    <property type="project" value="dictyBase"/>
</dbReference>
<dbReference type="GO" id="GO:0042742">
    <property type="term" value="P:defense response to bacterium"/>
    <property type="evidence" value="ECO:0000314"/>
    <property type="project" value="dictyBase"/>
</dbReference>
<dbReference type="GO" id="GO:0070371">
    <property type="term" value="P:ERK1 and ERK2 cascade"/>
    <property type="evidence" value="ECO:0000315"/>
    <property type="project" value="dictyBase"/>
</dbReference>
<dbReference type="GO" id="GO:0140986">
    <property type="term" value="P:G protein-coupled chemorepellent receptor signaling pathway"/>
    <property type="evidence" value="ECO:0000315"/>
    <property type="project" value="dictyBase"/>
</dbReference>
<dbReference type="GO" id="GO:0007186">
    <property type="term" value="P:G protein-coupled receptor signaling pathway"/>
    <property type="evidence" value="ECO:0000316"/>
    <property type="project" value="dictyBase"/>
</dbReference>
<dbReference type="GO" id="GO:0035556">
    <property type="term" value="P:intracellular signal transduction"/>
    <property type="evidence" value="ECO:0000318"/>
    <property type="project" value="GO_Central"/>
</dbReference>
<dbReference type="GO" id="GO:0110094">
    <property type="term" value="P:polyphosphate-mediated signaling"/>
    <property type="evidence" value="ECO:0000315"/>
    <property type="project" value="dictyBase"/>
</dbReference>
<dbReference type="GO" id="GO:0031157">
    <property type="term" value="P:regulation of aggregate size involved in sorocarp development"/>
    <property type="evidence" value="ECO:0000315"/>
    <property type="project" value="dictyBase"/>
</dbReference>
<dbReference type="GO" id="GO:0031153">
    <property type="term" value="P:slug development involved in sorocarp development"/>
    <property type="evidence" value="ECO:0000315"/>
    <property type="project" value="dictyBase"/>
</dbReference>
<dbReference type="GO" id="GO:0030587">
    <property type="term" value="P:sorocarp development"/>
    <property type="evidence" value="ECO:0007001"/>
    <property type="project" value="dictyBase"/>
</dbReference>
<dbReference type="CDD" id="cd07858">
    <property type="entry name" value="STKc_TEY_MAPK"/>
    <property type="match status" value="1"/>
</dbReference>
<dbReference type="FunFam" id="1.10.510.10:FF:000013">
    <property type="entry name" value="Mitogen-activated protein kinase"/>
    <property type="match status" value="1"/>
</dbReference>
<dbReference type="FunFam" id="3.30.200.20:FF:000046">
    <property type="entry name" value="Mitogen-activated protein kinase"/>
    <property type="match status" value="1"/>
</dbReference>
<dbReference type="Gene3D" id="3.30.200.20">
    <property type="entry name" value="Phosphorylase Kinase, domain 1"/>
    <property type="match status" value="1"/>
</dbReference>
<dbReference type="Gene3D" id="1.10.510.10">
    <property type="entry name" value="Transferase(Phosphotransferase) domain 1"/>
    <property type="match status" value="1"/>
</dbReference>
<dbReference type="InterPro" id="IPR011009">
    <property type="entry name" value="Kinase-like_dom_sf"/>
</dbReference>
<dbReference type="InterPro" id="IPR050117">
    <property type="entry name" value="MAP_kinase"/>
</dbReference>
<dbReference type="InterPro" id="IPR003527">
    <property type="entry name" value="MAP_kinase_CS"/>
</dbReference>
<dbReference type="InterPro" id="IPR008352">
    <property type="entry name" value="MAPK_p38-like"/>
</dbReference>
<dbReference type="InterPro" id="IPR000719">
    <property type="entry name" value="Prot_kinase_dom"/>
</dbReference>
<dbReference type="InterPro" id="IPR017441">
    <property type="entry name" value="Protein_kinase_ATP_BS"/>
</dbReference>
<dbReference type="InterPro" id="IPR008271">
    <property type="entry name" value="Ser/Thr_kinase_AS"/>
</dbReference>
<dbReference type="PANTHER" id="PTHR24055">
    <property type="entry name" value="MITOGEN-ACTIVATED PROTEIN KINASE"/>
    <property type="match status" value="1"/>
</dbReference>
<dbReference type="Pfam" id="PF00069">
    <property type="entry name" value="Pkinase"/>
    <property type="match status" value="1"/>
</dbReference>
<dbReference type="PRINTS" id="PR01773">
    <property type="entry name" value="P38MAPKINASE"/>
</dbReference>
<dbReference type="SMART" id="SM00220">
    <property type="entry name" value="S_TKc"/>
    <property type="match status" value="1"/>
</dbReference>
<dbReference type="SUPFAM" id="SSF56112">
    <property type="entry name" value="Protein kinase-like (PK-like)"/>
    <property type="match status" value="1"/>
</dbReference>
<dbReference type="PROSITE" id="PS01351">
    <property type="entry name" value="MAPK"/>
    <property type="match status" value="1"/>
</dbReference>
<dbReference type="PROSITE" id="PS00107">
    <property type="entry name" value="PROTEIN_KINASE_ATP"/>
    <property type="match status" value="1"/>
</dbReference>
<dbReference type="PROSITE" id="PS50011">
    <property type="entry name" value="PROTEIN_KINASE_DOM"/>
    <property type="match status" value="1"/>
</dbReference>
<dbReference type="PROSITE" id="PS00108">
    <property type="entry name" value="PROTEIN_KINASE_ST"/>
    <property type="match status" value="1"/>
</dbReference>
<name>ERK1_DICDI</name>
<feature type="chain" id="PRO_0000186308" description="Extracellular signal-regulated kinase 1">
    <location>
        <begin position="1"/>
        <end position="529"/>
    </location>
</feature>
<feature type="domain" description="Protein kinase" evidence="2">
    <location>
        <begin position="149"/>
        <end position="439"/>
    </location>
</feature>
<feature type="region of interest" description="Disordered" evidence="4">
    <location>
        <begin position="1"/>
        <end position="20"/>
    </location>
</feature>
<feature type="region of interest" description="Disordered" evidence="4">
    <location>
        <begin position="100"/>
        <end position="131"/>
    </location>
</feature>
<feature type="short sequence motif" description="TXY">
    <location>
        <begin position="309"/>
        <end position="311"/>
    </location>
</feature>
<feature type="compositionally biased region" description="Polar residues" evidence="4">
    <location>
        <begin position="8"/>
        <end position="20"/>
    </location>
</feature>
<feature type="compositionally biased region" description="Low complexity" evidence="4">
    <location>
        <begin position="100"/>
        <end position="117"/>
    </location>
</feature>
<feature type="active site" description="Proton acceptor" evidence="2 3">
    <location>
        <position position="275"/>
    </location>
</feature>
<feature type="binding site" evidence="2">
    <location>
        <begin position="155"/>
        <end position="163"/>
    </location>
    <ligand>
        <name>ATP</name>
        <dbReference type="ChEBI" id="CHEBI:30616"/>
    </ligand>
</feature>
<feature type="binding site" evidence="2">
    <location>
        <position position="178"/>
    </location>
    <ligand>
        <name>ATP</name>
        <dbReference type="ChEBI" id="CHEBI:30616"/>
    </ligand>
</feature>
<feature type="modified residue" description="Phosphothreonine" evidence="1">
    <location>
        <position position="309"/>
    </location>
</feature>
<feature type="modified residue" description="Phosphotyrosine" evidence="1">
    <location>
        <position position="311"/>
    </location>
</feature>
<feature type="sequence conflict" description="In Ref. 1; AAA59387." evidence="6" ref="1">
    <original>R</original>
    <variation>RSL</variation>
    <location>
        <position position="389"/>
    </location>
</feature>
<feature type="sequence conflict" description="In Ref. 1; AAA59387." evidence="6" ref="1">
    <original>Q</original>
    <variation>P</variation>
    <location>
        <position position="517"/>
    </location>
</feature>
<feature type="sequence conflict" description="In Ref. 1; AAA59387." evidence="6" ref="1">
    <original>N</original>
    <variation>INN</variation>
    <location>
        <position position="529"/>
    </location>
</feature>
<comment type="function">
    <text evidence="5">Kinase involved in a signal transduction pathway.</text>
</comment>
<comment type="catalytic activity">
    <reaction>
        <text>L-seryl-[protein] + ATP = O-phospho-L-seryl-[protein] + ADP + H(+)</text>
        <dbReference type="Rhea" id="RHEA:17989"/>
        <dbReference type="Rhea" id="RHEA-COMP:9863"/>
        <dbReference type="Rhea" id="RHEA-COMP:11604"/>
        <dbReference type="ChEBI" id="CHEBI:15378"/>
        <dbReference type="ChEBI" id="CHEBI:29999"/>
        <dbReference type="ChEBI" id="CHEBI:30616"/>
        <dbReference type="ChEBI" id="CHEBI:83421"/>
        <dbReference type="ChEBI" id="CHEBI:456216"/>
        <dbReference type="EC" id="2.7.11.24"/>
    </reaction>
</comment>
<comment type="catalytic activity">
    <reaction>
        <text>L-threonyl-[protein] + ATP = O-phospho-L-threonyl-[protein] + ADP + H(+)</text>
        <dbReference type="Rhea" id="RHEA:46608"/>
        <dbReference type="Rhea" id="RHEA-COMP:11060"/>
        <dbReference type="Rhea" id="RHEA-COMP:11605"/>
        <dbReference type="ChEBI" id="CHEBI:15378"/>
        <dbReference type="ChEBI" id="CHEBI:30013"/>
        <dbReference type="ChEBI" id="CHEBI:30616"/>
        <dbReference type="ChEBI" id="CHEBI:61977"/>
        <dbReference type="ChEBI" id="CHEBI:456216"/>
        <dbReference type="EC" id="2.7.11.24"/>
    </reaction>
</comment>
<comment type="cofactor">
    <cofactor evidence="1">
        <name>Mg(2+)</name>
        <dbReference type="ChEBI" id="CHEBI:18420"/>
    </cofactor>
</comment>
<comment type="activity regulation">
    <text evidence="1">Activated by tyrosine and threonine phosphorylation.</text>
</comment>
<comment type="domain">
    <text evidence="1">The TXY motif contains the threonine and tyrosine residues whose phosphorylation activates the MAP kinases.</text>
</comment>
<comment type="PTM">
    <text evidence="1">Dually phosphorylated on Thr-309 and Tyr-311, which activates the enzyme.</text>
</comment>
<comment type="similarity">
    <text evidence="6">Belongs to the protein kinase superfamily. CMGC Ser/Thr protein kinase family. MAP kinase subfamily.</text>
</comment>
<comment type="sequence caution" evidence="6">
    <conflict type="erroneous initiation">
        <sequence resource="EMBL-CDS" id="AAA59387"/>
    </conflict>
</comment>
<keyword id="KW-0067">ATP-binding</keyword>
<keyword id="KW-0131">Cell cycle</keyword>
<keyword id="KW-0132">Cell division</keyword>
<keyword id="KW-0418">Kinase</keyword>
<keyword id="KW-0498">Mitosis</keyword>
<keyword id="KW-0547">Nucleotide-binding</keyword>
<keyword id="KW-0597">Phosphoprotein</keyword>
<keyword id="KW-1185">Reference proteome</keyword>
<keyword id="KW-0723">Serine/threonine-protein kinase</keyword>
<keyword id="KW-0808">Transferase</keyword>
<accession>P42525</accession>
<accession>Q54LX6</accession>
<protein>
    <recommendedName>
        <fullName>Extracellular signal-regulated kinase 1</fullName>
        <shortName>ERK1</shortName>
        <ecNumber>2.7.11.24</ecNumber>
    </recommendedName>
    <alternativeName>
        <fullName>MAP kinase 1</fullName>
    </alternativeName>
</protein>